<reference key="1">
    <citation type="submission" date="2000-03" db="EMBL/GenBank/DDBJ databases">
        <title>Cloning and expression of Arabidopsis thaliana Glu-tRNA(Glu) synthetase mRNA.</title>
        <authorList>
            <person name="Chang W."/>
            <person name="Soell D."/>
        </authorList>
    </citation>
    <scope>NUCLEOTIDE SEQUENCE [MRNA]</scope>
</reference>
<reference key="2">
    <citation type="journal article" date="1997" name="DNA Res.">
        <title>Structural analysis of Arabidopsis thaliana chromosome 5. III. Sequence features of the regions of 1,191,918 bp covered by seventeen physically assigned P1 clones.</title>
        <authorList>
            <person name="Nakamura Y."/>
            <person name="Sato S."/>
            <person name="Kaneko T."/>
            <person name="Kotani H."/>
            <person name="Asamizu E."/>
            <person name="Miyajima N."/>
            <person name="Tabata S."/>
        </authorList>
    </citation>
    <scope>NUCLEOTIDE SEQUENCE [LARGE SCALE GENOMIC DNA]</scope>
    <source>
        <strain>cv. Columbia</strain>
    </source>
</reference>
<reference key="3">
    <citation type="journal article" date="2017" name="Plant J.">
        <title>Araport11: a complete reannotation of the Arabidopsis thaliana reference genome.</title>
        <authorList>
            <person name="Cheng C.Y."/>
            <person name="Krishnakumar V."/>
            <person name="Chan A.P."/>
            <person name="Thibaud-Nissen F."/>
            <person name="Schobel S."/>
            <person name="Town C.D."/>
        </authorList>
    </citation>
    <scope>GENOME REANNOTATION</scope>
    <source>
        <strain>cv. Columbia</strain>
    </source>
</reference>
<reference key="4">
    <citation type="journal article" date="2003" name="Science">
        <title>Empirical analysis of transcriptional activity in the Arabidopsis genome.</title>
        <authorList>
            <person name="Yamada K."/>
            <person name="Lim J."/>
            <person name="Dale J.M."/>
            <person name="Chen H."/>
            <person name="Shinn P."/>
            <person name="Palm C.J."/>
            <person name="Southwick A.M."/>
            <person name="Wu H.C."/>
            <person name="Kim C.J."/>
            <person name="Nguyen M."/>
            <person name="Pham P.K."/>
            <person name="Cheuk R.F."/>
            <person name="Karlin-Newmann G."/>
            <person name="Liu S.X."/>
            <person name="Lam B."/>
            <person name="Sakano H."/>
            <person name="Wu T."/>
            <person name="Yu G."/>
            <person name="Miranda M."/>
            <person name="Quach H.L."/>
            <person name="Tripp M."/>
            <person name="Chang C.H."/>
            <person name="Lee J.M."/>
            <person name="Toriumi M.J."/>
            <person name="Chan M.M."/>
            <person name="Tang C.C."/>
            <person name="Onodera C.S."/>
            <person name="Deng J.M."/>
            <person name="Akiyama K."/>
            <person name="Ansari Y."/>
            <person name="Arakawa T."/>
            <person name="Banh J."/>
            <person name="Banno F."/>
            <person name="Bowser L."/>
            <person name="Brooks S.Y."/>
            <person name="Carninci P."/>
            <person name="Chao Q."/>
            <person name="Choy N."/>
            <person name="Enju A."/>
            <person name="Goldsmith A.D."/>
            <person name="Gurjal M."/>
            <person name="Hansen N.F."/>
            <person name="Hayashizaki Y."/>
            <person name="Johnson-Hopson C."/>
            <person name="Hsuan V.W."/>
            <person name="Iida K."/>
            <person name="Karnes M."/>
            <person name="Khan S."/>
            <person name="Koesema E."/>
            <person name="Ishida J."/>
            <person name="Jiang P.X."/>
            <person name="Jones T."/>
            <person name="Kawai J."/>
            <person name="Kamiya A."/>
            <person name="Meyers C."/>
            <person name="Nakajima M."/>
            <person name="Narusaka M."/>
            <person name="Seki M."/>
            <person name="Sakurai T."/>
            <person name="Satou M."/>
            <person name="Tamse R."/>
            <person name="Vaysberg M."/>
            <person name="Wallender E.K."/>
            <person name="Wong C."/>
            <person name="Yamamura Y."/>
            <person name="Yuan S."/>
            <person name="Shinozaki K."/>
            <person name="Davis R.W."/>
            <person name="Theologis A."/>
            <person name="Ecker J.R."/>
        </authorList>
    </citation>
    <scope>NUCLEOTIDE SEQUENCE [LARGE SCALE MRNA]</scope>
    <source>
        <strain>cv. Columbia</strain>
    </source>
</reference>
<reference key="5">
    <citation type="journal article" date="2005" name="J. Biol. Chem.">
        <title>Inactivation of organellar glutamyl- and seryl-tRNA synthetases leads to developmental arrest of chloroplasts and mitochondria in higher plants.</title>
        <authorList>
            <person name="Kim Y.K."/>
            <person name="Lee J.Y."/>
            <person name="Cho H.S."/>
            <person name="Lee S.S."/>
            <person name="Ha H.J."/>
            <person name="Kim S."/>
            <person name="Choi D."/>
            <person name="Pai H.S."/>
        </authorList>
    </citation>
    <scope>SUBCELLULAR LOCATION</scope>
</reference>
<reference key="6">
    <citation type="journal article" date="2005" name="Plant J.">
        <title>Requirement of aminoacyl-tRNA synthetases for gametogenesis and embryo development in Arabidopsis.</title>
        <authorList>
            <person name="Berg M."/>
            <person name="Rogers R."/>
            <person name="Muralla R."/>
            <person name="Meinke D."/>
        </authorList>
    </citation>
    <scope>DISRUPTION PHENOTYPE</scope>
</reference>
<reference key="7">
    <citation type="journal article" date="2005" name="Proc. Natl. Acad. Sci. U.S.A.">
        <title>Dual targeting is the rule for organellar aminoacyl-tRNA synthetases in Arabidopsis thaliana.</title>
        <authorList>
            <person name="Duchene A.-M."/>
            <person name="Giritch A."/>
            <person name="Hoffmann B."/>
            <person name="Cognat V."/>
            <person name="Lancelin D."/>
            <person name="Peeters N.M."/>
            <person name="Zaepfel M."/>
            <person name="Marechal-Drouard L."/>
            <person name="Small I.D."/>
        </authorList>
    </citation>
    <scope>SUBCELLULAR LOCATION</scope>
</reference>
<reference key="8">
    <citation type="journal article" date="2007" name="J. Mol. Biol.">
        <title>How can organellar protein N-terminal sequences be dual targeting signals? In silico analysis and mutagenesis approach.</title>
        <authorList>
            <person name="Pujol C."/>
            <person name="Marechal-Drouard L."/>
            <person name="Duchene A.M."/>
        </authorList>
    </citation>
    <scope>SUBCELLULAR LOCATION</scope>
</reference>
<reference key="9">
    <citation type="journal article" date="2008" name="PLoS ONE">
        <title>Sorting signals, N-terminal modifications and abundance of the chloroplast proteome.</title>
        <authorList>
            <person name="Zybailov B."/>
            <person name="Rutschow H."/>
            <person name="Friso G."/>
            <person name="Rudella A."/>
            <person name="Emanuelsson O."/>
            <person name="Sun Q."/>
            <person name="van Wijk K.J."/>
        </authorList>
    </citation>
    <scope>IDENTIFICATION BY MASS SPECTROMETRY</scope>
    <scope>SUBCELLULAR LOCATION [LARGE SCALE ANALYSIS]</scope>
</reference>
<reference key="10">
    <citation type="journal article" date="2015" name="J. Exp. Bot.">
        <title>Identification of cleavage sites and substrate proteins for two mitochondrial intermediate peptidases in Arabidopsis thaliana.</title>
        <authorList>
            <person name="Carrie C."/>
            <person name="Venne A.S."/>
            <person name="Zahedi R.P."/>
            <person name="Soll J."/>
        </authorList>
    </citation>
    <scope>IDENTIFICATION BY MASS SPECTROMETRY</scope>
    <scope>CLEAVAGE OF TRANSIT PEPTIDE AFTER PHE-39</scope>
</reference>
<protein>
    <recommendedName>
        <fullName evidence="11">Glutamate--tRNA ligase, chloroplastic/mitochondrial</fullName>
        <ecNumber evidence="11">6.1.1.17</ecNumber>
    </recommendedName>
    <alternativeName>
        <fullName evidence="9">AtERS</fullName>
    </alternativeName>
    <alternativeName>
        <fullName evidence="11">Glutamyl-tRNA synthetase</fullName>
        <shortName evidence="11">GluRS</shortName>
    </alternativeName>
    <alternativeName>
        <fullName evidence="10">Protein OVULE ABORTION 3</fullName>
    </alternativeName>
</protein>
<comment type="function">
    <text evidence="2">Catalyzes the attachment of glutamate to tRNA(Glu) in a two-step reaction: glutamate is first activated by ATP to form Glu-AMP and then transferred to the acceptor end of tRNA(Glu).</text>
</comment>
<comment type="catalytic activity">
    <reaction evidence="11">
        <text>tRNA(Glu) + L-glutamate + ATP = L-glutamyl-tRNA(Glu) + AMP + diphosphate</text>
        <dbReference type="Rhea" id="RHEA:23540"/>
        <dbReference type="Rhea" id="RHEA-COMP:9663"/>
        <dbReference type="Rhea" id="RHEA-COMP:9680"/>
        <dbReference type="ChEBI" id="CHEBI:29985"/>
        <dbReference type="ChEBI" id="CHEBI:30616"/>
        <dbReference type="ChEBI" id="CHEBI:33019"/>
        <dbReference type="ChEBI" id="CHEBI:78442"/>
        <dbReference type="ChEBI" id="CHEBI:78520"/>
        <dbReference type="ChEBI" id="CHEBI:456215"/>
        <dbReference type="EC" id="6.1.1.17"/>
    </reaction>
</comment>
<comment type="subcellular location">
    <subcellularLocation>
        <location evidence="3 4 6 7">Plastid</location>
        <location evidence="3 4 6 7">Chloroplast</location>
    </subcellularLocation>
    <subcellularLocation>
        <location evidence="3 4 6 12">Mitochondrion</location>
    </subcellularLocation>
</comment>
<comment type="disruption phenotype">
    <text evidence="5">Lethal. In heterozygous plants, aborted ovules.</text>
</comment>
<comment type="similarity">
    <text evidence="11">Belongs to the class-I aminoacyl-tRNA synthetase family. Glutamate--tRNA ligase type 1 subfamily.</text>
</comment>
<organism>
    <name type="scientific">Arabidopsis thaliana</name>
    <name type="common">Mouse-ear cress</name>
    <dbReference type="NCBI Taxonomy" id="3702"/>
    <lineage>
        <taxon>Eukaryota</taxon>
        <taxon>Viridiplantae</taxon>
        <taxon>Streptophyta</taxon>
        <taxon>Embryophyta</taxon>
        <taxon>Tracheophyta</taxon>
        <taxon>Spermatophyta</taxon>
        <taxon>Magnoliopsida</taxon>
        <taxon>eudicotyledons</taxon>
        <taxon>Gunneridae</taxon>
        <taxon>Pentapetalae</taxon>
        <taxon>rosids</taxon>
        <taxon>malvids</taxon>
        <taxon>Brassicales</taxon>
        <taxon>Brassicaceae</taxon>
        <taxon>Camelineae</taxon>
        <taxon>Arabidopsis</taxon>
    </lineage>
</organism>
<proteinExistence type="evidence at protein level"/>
<name>SYEM_ARATH</name>
<dbReference type="EC" id="6.1.1.17" evidence="11"/>
<dbReference type="EMBL" id="AF241841">
    <property type="protein sequence ID" value="AAG29098.1"/>
    <property type="molecule type" value="mRNA"/>
</dbReference>
<dbReference type="EMBL" id="AB008266">
    <property type="protein sequence ID" value="BAB10273.1"/>
    <property type="molecule type" value="Genomic_DNA"/>
</dbReference>
<dbReference type="EMBL" id="CP002688">
    <property type="protein sequence ID" value="AED97834.1"/>
    <property type="molecule type" value="Genomic_DNA"/>
</dbReference>
<dbReference type="EMBL" id="AY054215">
    <property type="protein sequence ID" value="AAL06875.1"/>
    <property type="molecule type" value="mRNA"/>
</dbReference>
<dbReference type="EMBL" id="AY062560">
    <property type="protein sequence ID" value="AAL32638.1"/>
    <property type="molecule type" value="mRNA"/>
</dbReference>
<dbReference type="EMBL" id="AY114676">
    <property type="protein sequence ID" value="AAM47995.1"/>
    <property type="molecule type" value="mRNA"/>
</dbReference>
<dbReference type="SMR" id="Q9FEA2"/>
<dbReference type="BioGRID" id="21768">
    <property type="interactions" value="10"/>
</dbReference>
<dbReference type="FunCoup" id="Q9FEA2">
    <property type="interactions" value="2712"/>
</dbReference>
<dbReference type="IntAct" id="Q9FEA2">
    <property type="interactions" value="1"/>
</dbReference>
<dbReference type="STRING" id="3702.Q9FEA2"/>
<dbReference type="iPTMnet" id="Q9FEA2"/>
<dbReference type="PaxDb" id="3702-AT5G64050.1"/>
<dbReference type="ProteomicsDB" id="232979"/>
<dbReference type="EnsemblPlants" id="AT5G64050.1">
    <property type="protein sequence ID" value="AT5G64050.1"/>
    <property type="gene ID" value="AT5G64050"/>
</dbReference>
<dbReference type="GeneID" id="836526"/>
<dbReference type="Gramene" id="AT5G64050.1">
    <property type="protein sequence ID" value="AT5G64050.1"/>
    <property type="gene ID" value="AT5G64050"/>
</dbReference>
<dbReference type="KEGG" id="ath:AT5G64050"/>
<dbReference type="Araport" id="AT5G64050"/>
<dbReference type="TAIR" id="AT5G64050">
    <property type="gene designation" value="ERS"/>
</dbReference>
<dbReference type="eggNOG" id="KOG1149">
    <property type="taxonomic scope" value="Eukaryota"/>
</dbReference>
<dbReference type="HOGENOM" id="CLU_015768_6_3_1"/>
<dbReference type="InParanoid" id="Q9FEA2"/>
<dbReference type="OMA" id="PHWRFKL"/>
<dbReference type="OrthoDB" id="428822at2759"/>
<dbReference type="PhylomeDB" id="Q9FEA2"/>
<dbReference type="PRO" id="PR:Q9FEA2"/>
<dbReference type="Proteomes" id="UP000006548">
    <property type="component" value="Chromosome 5"/>
</dbReference>
<dbReference type="ExpressionAtlas" id="Q9FEA2">
    <property type="expression patterns" value="baseline and differential"/>
</dbReference>
<dbReference type="GO" id="GO:0009507">
    <property type="term" value="C:chloroplast"/>
    <property type="evidence" value="ECO:0000314"/>
    <property type="project" value="TAIR"/>
</dbReference>
<dbReference type="GO" id="GO:0009570">
    <property type="term" value="C:chloroplast stroma"/>
    <property type="evidence" value="ECO:0007005"/>
    <property type="project" value="TAIR"/>
</dbReference>
<dbReference type="GO" id="GO:0005739">
    <property type="term" value="C:mitochondrion"/>
    <property type="evidence" value="ECO:0000314"/>
    <property type="project" value="TAIR"/>
</dbReference>
<dbReference type="GO" id="GO:0009536">
    <property type="term" value="C:plastid"/>
    <property type="evidence" value="ECO:0007005"/>
    <property type="project" value="TAIR"/>
</dbReference>
<dbReference type="GO" id="GO:0005524">
    <property type="term" value="F:ATP binding"/>
    <property type="evidence" value="ECO:0007669"/>
    <property type="project" value="UniProtKB-KW"/>
</dbReference>
<dbReference type="GO" id="GO:0004818">
    <property type="term" value="F:glutamate-tRNA ligase activity"/>
    <property type="evidence" value="ECO:0007669"/>
    <property type="project" value="UniProtKB-EC"/>
</dbReference>
<dbReference type="GO" id="GO:0000049">
    <property type="term" value="F:tRNA binding"/>
    <property type="evidence" value="ECO:0007669"/>
    <property type="project" value="InterPro"/>
</dbReference>
<dbReference type="GO" id="GO:0008270">
    <property type="term" value="F:zinc ion binding"/>
    <property type="evidence" value="ECO:0007669"/>
    <property type="project" value="InterPro"/>
</dbReference>
<dbReference type="GO" id="GO:0009658">
    <property type="term" value="P:chloroplast organization"/>
    <property type="evidence" value="ECO:0000304"/>
    <property type="project" value="TAIR"/>
</dbReference>
<dbReference type="GO" id="GO:0006424">
    <property type="term" value="P:glutamyl-tRNA aminoacylation"/>
    <property type="evidence" value="ECO:0000250"/>
    <property type="project" value="TAIR"/>
</dbReference>
<dbReference type="GO" id="GO:0007005">
    <property type="term" value="P:mitochondrion organization"/>
    <property type="evidence" value="ECO:0000304"/>
    <property type="project" value="TAIR"/>
</dbReference>
<dbReference type="GO" id="GO:0048481">
    <property type="term" value="P:plant ovule development"/>
    <property type="evidence" value="ECO:0000315"/>
    <property type="project" value="TAIR"/>
</dbReference>
<dbReference type="CDD" id="cd00808">
    <property type="entry name" value="GluRS_core"/>
    <property type="match status" value="1"/>
</dbReference>
<dbReference type="FunFam" id="1.10.10.350:FF:000004">
    <property type="entry name" value="Glutamate--tRNA ligase chloroplastic/mitochondrial"/>
    <property type="match status" value="1"/>
</dbReference>
<dbReference type="FunFam" id="3.40.50.620:FF:000045">
    <property type="entry name" value="Glutamate--tRNA ligase, mitochondrial"/>
    <property type="match status" value="1"/>
</dbReference>
<dbReference type="Gene3D" id="1.10.10.350">
    <property type="match status" value="1"/>
</dbReference>
<dbReference type="Gene3D" id="3.40.50.620">
    <property type="entry name" value="HUPs"/>
    <property type="match status" value="1"/>
</dbReference>
<dbReference type="HAMAP" id="MF_00022">
    <property type="entry name" value="Glu_tRNA_synth_type1"/>
    <property type="match status" value="1"/>
</dbReference>
<dbReference type="InterPro" id="IPR045462">
    <property type="entry name" value="aa-tRNA-synth_I_cd-bd"/>
</dbReference>
<dbReference type="InterPro" id="IPR020751">
    <property type="entry name" value="aa-tRNA-synth_I_codon-bd_sub2"/>
</dbReference>
<dbReference type="InterPro" id="IPR001412">
    <property type="entry name" value="aa-tRNA-synth_I_CS"/>
</dbReference>
<dbReference type="InterPro" id="IPR008925">
    <property type="entry name" value="aa_tRNA-synth_I_cd-bd_sf"/>
</dbReference>
<dbReference type="InterPro" id="IPR004527">
    <property type="entry name" value="Glu-tRNA-ligase_bac/mito"/>
</dbReference>
<dbReference type="InterPro" id="IPR000924">
    <property type="entry name" value="Glu/Gln-tRNA-synth"/>
</dbReference>
<dbReference type="InterPro" id="IPR020058">
    <property type="entry name" value="Glu/Gln-tRNA-synth_Ib_cat-dom"/>
</dbReference>
<dbReference type="InterPro" id="IPR049940">
    <property type="entry name" value="GluQ/Sye"/>
</dbReference>
<dbReference type="InterPro" id="IPR033910">
    <property type="entry name" value="GluRS_core"/>
</dbReference>
<dbReference type="InterPro" id="IPR014729">
    <property type="entry name" value="Rossmann-like_a/b/a_fold"/>
</dbReference>
<dbReference type="NCBIfam" id="TIGR00464">
    <property type="entry name" value="gltX_bact"/>
    <property type="match status" value="1"/>
</dbReference>
<dbReference type="PANTHER" id="PTHR43311">
    <property type="entry name" value="GLUTAMATE--TRNA LIGASE"/>
    <property type="match status" value="1"/>
</dbReference>
<dbReference type="PANTHER" id="PTHR43311:SF2">
    <property type="entry name" value="GLUTAMATE--TRNA LIGASE, MITOCHONDRIAL-RELATED"/>
    <property type="match status" value="1"/>
</dbReference>
<dbReference type="Pfam" id="PF19269">
    <property type="entry name" value="Anticodon_2"/>
    <property type="match status" value="1"/>
</dbReference>
<dbReference type="Pfam" id="PF00749">
    <property type="entry name" value="tRNA-synt_1c"/>
    <property type="match status" value="1"/>
</dbReference>
<dbReference type="PRINTS" id="PR00987">
    <property type="entry name" value="TRNASYNTHGLU"/>
</dbReference>
<dbReference type="SUPFAM" id="SSF48163">
    <property type="entry name" value="An anticodon-binding domain of class I aminoacyl-tRNA synthetases"/>
    <property type="match status" value="1"/>
</dbReference>
<dbReference type="SUPFAM" id="SSF52374">
    <property type="entry name" value="Nucleotidylyl transferase"/>
    <property type="match status" value="1"/>
</dbReference>
<dbReference type="PROSITE" id="PS00178">
    <property type="entry name" value="AA_TRNA_LIGASE_I"/>
    <property type="match status" value="1"/>
</dbReference>
<keyword id="KW-0030">Aminoacyl-tRNA synthetase</keyword>
<keyword id="KW-0067">ATP-binding</keyword>
<keyword id="KW-0150">Chloroplast</keyword>
<keyword id="KW-0436">Ligase</keyword>
<keyword id="KW-0496">Mitochondrion</keyword>
<keyword id="KW-0547">Nucleotide-binding</keyword>
<keyword id="KW-0934">Plastid</keyword>
<keyword id="KW-0648">Protein biosynthesis</keyword>
<keyword id="KW-1185">Reference proteome</keyword>
<keyword id="KW-0809">Transit peptide</keyword>
<sequence>MASLVYGTPWLRVRSLPELAPAFLRRRQSSLFYCSRRSFAVVACSTPVNNGGSVRVRFAPSPTGNLHVGGARTALFNYLFARSKGGKFVLRIEDTDLERSTRESEAAVLQDLSWLGLDWDEGPGVSGDFGPYRQSERNALYKQYAEKLLESGHVYRCFCSSEELVKMKENAKLKQLPPVYTGKWATASDAEIEQELEKGTPFTYRFRVPKEGSLKINDLIRGEVCWNLDTLGDFVVMRSNGQPVYNFCVTVDDATMAISHVIRAEEHLPNTLRQALIYKALKFPMPQFAHVSLILAPDRSKLSKRHGATSVGQYREMGYLPQGMVNYLALLGWGDGTENEFFTLEDLVEKFSIERVNKSGAIFDSTKLRWMNGQHLRALPNEKLTKLVGERWKSAGILTESEGSFVNEAVELLKDGIELVTDSDKVLLNLLSYPLHATLASPEAKPAVEDKLHEVAASLIAAYDSGEIPSALEEGQGAWQKWVKAFGKSLKRKGKSLFMPLRVLLTGKLHGPEMGTSIVLIYKAGSPGIVVPQAGFVSMEERFKILREIDWEALNKDESVPLESTATVST</sequence>
<gene>
    <name evidence="10" type="primary">OVA3</name>
    <name type="ordered locus">At5g64050</name>
    <name type="ORF">MHJ24.3</name>
</gene>
<evidence type="ECO:0000250" key="1"/>
<evidence type="ECO:0000250" key="2">
    <source>
        <dbReference type="UniProtKB" id="P46655"/>
    </source>
</evidence>
<evidence type="ECO:0000269" key="3">
    <source>
    </source>
</evidence>
<evidence type="ECO:0000269" key="4">
    <source>
    </source>
</evidence>
<evidence type="ECO:0000269" key="5">
    <source>
    </source>
</evidence>
<evidence type="ECO:0000269" key="6">
    <source>
    </source>
</evidence>
<evidence type="ECO:0000269" key="7">
    <source>
    </source>
</evidence>
<evidence type="ECO:0000269" key="8">
    <source>
    </source>
</evidence>
<evidence type="ECO:0000303" key="9">
    <source>
    </source>
</evidence>
<evidence type="ECO:0000303" key="10">
    <source>
    </source>
</evidence>
<evidence type="ECO:0000305" key="11"/>
<evidence type="ECO:0000305" key="12">
    <source>
    </source>
</evidence>
<feature type="transit peptide" description="Chloroplast and mitochondrion" evidence="8">
    <location>
        <begin position="1"/>
        <end position="39"/>
    </location>
</feature>
<feature type="chain" id="PRO_0000119735" description="Glutamate--tRNA ligase, chloroplastic/mitochondrial" evidence="11">
    <location>
        <begin position="40"/>
        <end position="570"/>
    </location>
</feature>
<feature type="short sequence motif" description="'HIGH' region" evidence="11">
    <location>
        <begin position="60"/>
        <end position="70"/>
    </location>
</feature>
<feature type="short sequence motif" description="'KMSKS' region" evidence="11">
    <location>
        <begin position="301"/>
        <end position="305"/>
    </location>
</feature>
<feature type="binding site" evidence="1">
    <location>
        <begin position="57"/>
        <end position="59"/>
    </location>
    <ligand>
        <name>L-glutamate</name>
        <dbReference type="ChEBI" id="CHEBI:29985"/>
    </ligand>
</feature>
<feature type="binding site" evidence="1">
    <location>
        <position position="67"/>
    </location>
    <ligand>
        <name>ATP</name>
        <dbReference type="ChEBI" id="CHEBI:30616"/>
    </ligand>
</feature>
<feature type="binding site" evidence="1">
    <location>
        <position position="93"/>
    </location>
    <ligand>
        <name>L-glutamate</name>
        <dbReference type="ChEBI" id="CHEBI:29985"/>
    </ligand>
</feature>
<feature type="binding site" evidence="1">
    <location>
        <begin position="245"/>
        <end position="249"/>
    </location>
    <ligand>
        <name>L-glutamate</name>
        <dbReference type="ChEBI" id="CHEBI:29985"/>
    </ligand>
</feature>
<feature type="binding site" evidence="1">
    <location>
        <position position="263"/>
    </location>
    <ligand>
        <name>L-glutamate</name>
        <dbReference type="ChEBI" id="CHEBI:29985"/>
    </ligand>
</feature>
<feature type="binding site" evidence="1">
    <location>
        <position position="266"/>
    </location>
    <ligand>
        <name>ATP</name>
        <dbReference type="ChEBI" id="CHEBI:30616"/>
    </ligand>
</feature>
<feature type="binding site" evidence="1">
    <location>
        <begin position="301"/>
        <end position="305"/>
    </location>
    <ligand>
        <name>ATP</name>
        <dbReference type="ChEBI" id="CHEBI:30616"/>
    </ligand>
</feature>
<feature type="sequence conflict" description="In Ref. 4; AAL06875/AAL32638/AAM47995." evidence="11" ref="4">
    <original>A</original>
    <variation>V</variation>
    <location>
        <position position="74"/>
    </location>
</feature>
<accession>Q9FEA2</accession>
<accession>Q940P6</accession>